<proteinExistence type="evidence at protein level"/>
<gene>
    <name type="primary">Atp4b</name>
</gene>
<protein>
    <recommendedName>
        <fullName>Potassium-transporting ATPase subunit beta</fullName>
    </recommendedName>
    <alternativeName>
        <fullName>Gastric H(+)/K(+) ATPase subunit beta</fullName>
    </alternativeName>
    <alternativeName>
        <fullName>Proton pump beta chain</fullName>
    </alternativeName>
</protein>
<sequence>MAALQEKKSCSQRMAEFRHYCWNPDTGQMLGRTPARWVWISLYYAGFYVVMTGLFALCIYVLMQTIDPYTPDYQDQLKSPGVTLRPDVYGERGLKISYNVSENSSWAGLTHTLHSFLAGYTPASQQDSINCTSEKYFFQESFAAPNHTKFSCKFTADMLQNCSGLADPSFGFEEGKPCFIIKMNRIVKFLPSNNTAPRVDCTFQDDPQKPRKDTEPLQVEYYPPNGTFSLHYFPYYGKKAQPHYSNPLVAAKLLNVPKNMQVSIVCKILADHVTFNNPHDPYEGKVEFKLTIQK</sequence>
<reference key="1">
    <citation type="journal article" date="1992" name="J. Biol. Chem.">
        <title>The mouse gastric H,K-ATPase beta subunit. Gene structure and co-ordinate expression with the alpha subunit during ontogeny.</title>
        <authorList>
            <person name="Morley G.P."/>
            <person name="Callaghan J.M."/>
            <person name="Rose J.B."/>
            <person name="Toh H."/>
            <person name="Gleeson P.A."/>
            <person name="van Driel I.R."/>
        </authorList>
    </citation>
    <scope>NUCLEOTIDE SEQUENCE [GENOMIC DNA]</scope>
    <source>
        <strain>C57BL/6J</strain>
        <tissue>Spleen</tissue>
    </source>
</reference>
<reference key="2">
    <citation type="journal article" date="1991" name="Proc. Natl. Acad. Sci. U.S.A.">
        <title>Structural organization and transcription of the mouse gastric H+, K(+)-ATPase beta subunit gene.</title>
        <authorList>
            <person name="Canfield V.A."/>
            <person name="Levenson R."/>
        </authorList>
    </citation>
    <scope>NUCLEOTIDE SEQUENCE [GENOMIC DNA]</scope>
    <source>
        <strain>BALB/cJ</strain>
    </source>
</reference>
<reference key="3">
    <citation type="journal article" date="2005" name="Science">
        <title>The transcriptional landscape of the mammalian genome.</title>
        <authorList>
            <person name="Carninci P."/>
            <person name="Kasukawa T."/>
            <person name="Katayama S."/>
            <person name="Gough J."/>
            <person name="Frith M.C."/>
            <person name="Maeda N."/>
            <person name="Oyama R."/>
            <person name="Ravasi T."/>
            <person name="Lenhard B."/>
            <person name="Wells C."/>
            <person name="Kodzius R."/>
            <person name="Shimokawa K."/>
            <person name="Bajic V.B."/>
            <person name="Brenner S.E."/>
            <person name="Batalov S."/>
            <person name="Forrest A.R."/>
            <person name="Zavolan M."/>
            <person name="Davis M.J."/>
            <person name="Wilming L.G."/>
            <person name="Aidinis V."/>
            <person name="Allen J.E."/>
            <person name="Ambesi-Impiombato A."/>
            <person name="Apweiler R."/>
            <person name="Aturaliya R.N."/>
            <person name="Bailey T.L."/>
            <person name="Bansal M."/>
            <person name="Baxter L."/>
            <person name="Beisel K.W."/>
            <person name="Bersano T."/>
            <person name="Bono H."/>
            <person name="Chalk A.M."/>
            <person name="Chiu K.P."/>
            <person name="Choudhary V."/>
            <person name="Christoffels A."/>
            <person name="Clutterbuck D.R."/>
            <person name="Crowe M.L."/>
            <person name="Dalla E."/>
            <person name="Dalrymple B.P."/>
            <person name="de Bono B."/>
            <person name="Della Gatta G."/>
            <person name="di Bernardo D."/>
            <person name="Down T."/>
            <person name="Engstrom P."/>
            <person name="Fagiolini M."/>
            <person name="Faulkner G."/>
            <person name="Fletcher C.F."/>
            <person name="Fukushima T."/>
            <person name="Furuno M."/>
            <person name="Futaki S."/>
            <person name="Gariboldi M."/>
            <person name="Georgii-Hemming P."/>
            <person name="Gingeras T.R."/>
            <person name="Gojobori T."/>
            <person name="Green R.E."/>
            <person name="Gustincich S."/>
            <person name="Harbers M."/>
            <person name="Hayashi Y."/>
            <person name="Hensch T.K."/>
            <person name="Hirokawa N."/>
            <person name="Hill D."/>
            <person name="Huminiecki L."/>
            <person name="Iacono M."/>
            <person name="Ikeo K."/>
            <person name="Iwama A."/>
            <person name="Ishikawa T."/>
            <person name="Jakt M."/>
            <person name="Kanapin A."/>
            <person name="Katoh M."/>
            <person name="Kawasawa Y."/>
            <person name="Kelso J."/>
            <person name="Kitamura H."/>
            <person name="Kitano H."/>
            <person name="Kollias G."/>
            <person name="Krishnan S.P."/>
            <person name="Kruger A."/>
            <person name="Kummerfeld S.K."/>
            <person name="Kurochkin I.V."/>
            <person name="Lareau L.F."/>
            <person name="Lazarevic D."/>
            <person name="Lipovich L."/>
            <person name="Liu J."/>
            <person name="Liuni S."/>
            <person name="McWilliam S."/>
            <person name="Madan Babu M."/>
            <person name="Madera M."/>
            <person name="Marchionni L."/>
            <person name="Matsuda H."/>
            <person name="Matsuzawa S."/>
            <person name="Miki H."/>
            <person name="Mignone F."/>
            <person name="Miyake S."/>
            <person name="Morris K."/>
            <person name="Mottagui-Tabar S."/>
            <person name="Mulder N."/>
            <person name="Nakano N."/>
            <person name="Nakauchi H."/>
            <person name="Ng P."/>
            <person name="Nilsson R."/>
            <person name="Nishiguchi S."/>
            <person name="Nishikawa S."/>
            <person name="Nori F."/>
            <person name="Ohara O."/>
            <person name="Okazaki Y."/>
            <person name="Orlando V."/>
            <person name="Pang K.C."/>
            <person name="Pavan W.J."/>
            <person name="Pavesi G."/>
            <person name="Pesole G."/>
            <person name="Petrovsky N."/>
            <person name="Piazza S."/>
            <person name="Reed J."/>
            <person name="Reid J.F."/>
            <person name="Ring B.Z."/>
            <person name="Ringwald M."/>
            <person name="Rost B."/>
            <person name="Ruan Y."/>
            <person name="Salzberg S.L."/>
            <person name="Sandelin A."/>
            <person name="Schneider C."/>
            <person name="Schoenbach C."/>
            <person name="Sekiguchi K."/>
            <person name="Semple C.A."/>
            <person name="Seno S."/>
            <person name="Sessa L."/>
            <person name="Sheng Y."/>
            <person name="Shibata Y."/>
            <person name="Shimada H."/>
            <person name="Shimada K."/>
            <person name="Silva D."/>
            <person name="Sinclair B."/>
            <person name="Sperling S."/>
            <person name="Stupka E."/>
            <person name="Sugiura K."/>
            <person name="Sultana R."/>
            <person name="Takenaka Y."/>
            <person name="Taki K."/>
            <person name="Tammoja K."/>
            <person name="Tan S.L."/>
            <person name="Tang S."/>
            <person name="Taylor M.S."/>
            <person name="Tegner J."/>
            <person name="Teichmann S.A."/>
            <person name="Ueda H.R."/>
            <person name="van Nimwegen E."/>
            <person name="Verardo R."/>
            <person name="Wei C.L."/>
            <person name="Yagi K."/>
            <person name="Yamanishi H."/>
            <person name="Zabarovsky E."/>
            <person name="Zhu S."/>
            <person name="Zimmer A."/>
            <person name="Hide W."/>
            <person name="Bult C."/>
            <person name="Grimmond S.M."/>
            <person name="Teasdale R.D."/>
            <person name="Liu E.T."/>
            <person name="Brusic V."/>
            <person name="Quackenbush J."/>
            <person name="Wahlestedt C."/>
            <person name="Mattick J.S."/>
            <person name="Hume D.A."/>
            <person name="Kai C."/>
            <person name="Sasaki D."/>
            <person name="Tomaru Y."/>
            <person name="Fukuda S."/>
            <person name="Kanamori-Katayama M."/>
            <person name="Suzuki M."/>
            <person name="Aoki J."/>
            <person name="Arakawa T."/>
            <person name="Iida J."/>
            <person name="Imamura K."/>
            <person name="Itoh M."/>
            <person name="Kato T."/>
            <person name="Kawaji H."/>
            <person name="Kawagashira N."/>
            <person name="Kawashima T."/>
            <person name="Kojima M."/>
            <person name="Kondo S."/>
            <person name="Konno H."/>
            <person name="Nakano K."/>
            <person name="Ninomiya N."/>
            <person name="Nishio T."/>
            <person name="Okada M."/>
            <person name="Plessy C."/>
            <person name="Shibata K."/>
            <person name="Shiraki T."/>
            <person name="Suzuki S."/>
            <person name="Tagami M."/>
            <person name="Waki K."/>
            <person name="Watahiki A."/>
            <person name="Okamura-Oho Y."/>
            <person name="Suzuki H."/>
            <person name="Kawai J."/>
            <person name="Hayashizaki Y."/>
        </authorList>
    </citation>
    <scope>NUCLEOTIDE SEQUENCE [LARGE SCALE MRNA]</scope>
    <source>
        <strain>C57BL/6J</strain>
        <tissue>Small intestine</tissue>
        <tissue>Tongue</tissue>
    </source>
</reference>
<reference key="4">
    <citation type="journal article" date="2000" name="J. Biol. Chem.">
        <title>Stomachs of mice lacking the gastric H,K-ATPase alpha -subunit have achlorhydria, abnormal parietal cells, and ciliated metaplasia.</title>
        <authorList>
            <person name="Spicer Z."/>
            <person name="Miller M.L."/>
            <person name="Andringa A."/>
            <person name="Riddle T.M."/>
            <person name="Duffy J.J."/>
            <person name="Doetschman T."/>
            <person name="Shull G.E."/>
        </authorList>
    </citation>
    <scope>TISSUE SPECIFICITY</scope>
</reference>
<dbReference type="EMBL" id="M80251">
    <property type="protein sequence ID" value="AAA37270.1"/>
    <property type="molecule type" value="Genomic_DNA"/>
</dbReference>
<dbReference type="EMBL" id="M80247">
    <property type="protein sequence ID" value="AAA37270.1"/>
    <property type="status" value="JOINED"/>
    <property type="molecule type" value="Genomic_DNA"/>
</dbReference>
<dbReference type="EMBL" id="M80248">
    <property type="protein sequence ID" value="AAA37270.1"/>
    <property type="status" value="JOINED"/>
    <property type="molecule type" value="Genomic_DNA"/>
</dbReference>
<dbReference type="EMBL" id="M80249">
    <property type="protein sequence ID" value="AAA37270.1"/>
    <property type="status" value="JOINED"/>
    <property type="molecule type" value="Genomic_DNA"/>
</dbReference>
<dbReference type="EMBL" id="M80250">
    <property type="protein sequence ID" value="AAA37270.1"/>
    <property type="status" value="JOINED"/>
    <property type="molecule type" value="Genomic_DNA"/>
</dbReference>
<dbReference type="EMBL" id="M64688">
    <property type="protein sequence ID" value="AAA37269.1"/>
    <property type="molecule type" value="Genomic_DNA"/>
</dbReference>
<dbReference type="EMBL" id="M64685">
    <property type="protein sequence ID" value="AAA37269.1"/>
    <property type="status" value="JOINED"/>
    <property type="molecule type" value="Genomic_DNA"/>
</dbReference>
<dbReference type="EMBL" id="M64686">
    <property type="protein sequence ID" value="AAA37269.1"/>
    <property type="status" value="JOINED"/>
    <property type="molecule type" value="Genomic_DNA"/>
</dbReference>
<dbReference type="EMBL" id="M64687">
    <property type="protein sequence ID" value="AAA37269.1"/>
    <property type="status" value="JOINED"/>
    <property type="molecule type" value="Genomic_DNA"/>
</dbReference>
<dbReference type="EMBL" id="AK008180">
    <property type="protein sequence ID" value="BAB25514.1"/>
    <property type="molecule type" value="mRNA"/>
</dbReference>
<dbReference type="EMBL" id="AK009499">
    <property type="protein sequence ID" value="BAB26326.1"/>
    <property type="molecule type" value="mRNA"/>
</dbReference>
<dbReference type="EMBL" id="AK009832">
    <property type="protein sequence ID" value="BAB26530.1"/>
    <property type="status" value="ALT_SEQ"/>
    <property type="molecule type" value="mRNA"/>
</dbReference>
<dbReference type="EMBL" id="AK009994">
    <property type="protein sequence ID" value="BAB26632.1"/>
    <property type="molecule type" value="mRNA"/>
</dbReference>
<dbReference type="EMBL" id="AK010003">
    <property type="protein sequence ID" value="BAB26635.1"/>
    <property type="molecule type" value="mRNA"/>
</dbReference>
<dbReference type="EMBL" id="AK010030">
    <property type="protein sequence ID" value="BAB26654.1"/>
    <property type="molecule type" value="mRNA"/>
</dbReference>
<dbReference type="EMBL" id="AK010049">
    <property type="protein sequence ID" value="BAB26665.1"/>
    <property type="molecule type" value="mRNA"/>
</dbReference>
<dbReference type="CCDS" id="CCDS22111.1"/>
<dbReference type="PIR" id="A40993">
    <property type="entry name" value="A40993"/>
</dbReference>
<dbReference type="RefSeq" id="NP_033854.1">
    <property type="nucleotide sequence ID" value="NM_009724.2"/>
</dbReference>
<dbReference type="SMR" id="P50992"/>
<dbReference type="ComplexPortal" id="CPX-3075">
    <property type="entry name" value="Hydrogen:potassium-exchanging ATPase complex"/>
</dbReference>
<dbReference type="FunCoup" id="P50992">
    <property type="interactions" value="248"/>
</dbReference>
<dbReference type="STRING" id="10090.ENSMUSP00000033826"/>
<dbReference type="GlyCosmos" id="P50992">
    <property type="glycosylation" value="7 sites, No reported glycans"/>
</dbReference>
<dbReference type="GlyGen" id="P50992">
    <property type="glycosylation" value="7 sites"/>
</dbReference>
<dbReference type="PhosphoSitePlus" id="P50992"/>
<dbReference type="PaxDb" id="10090-ENSMUSP00000033826"/>
<dbReference type="PeptideAtlas" id="P50992"/>
<dbReference type="ProteomicsDB" id="277074"/>
<dbReference type="Antibodypedia" id="25980">
    <property type="antibodies" value="266 antibodies from 30 providers"/>
</dbReference>
<dbReference type="Ensembl" id="ENSMUST00000033826.4">
    <property type="protein sequence ID" value="ENSMUSP00000033826.3"/>
    <property type="gene ID" value="ENSMUSG00000031449.11"/>
</dbReference>
<dbReference type="GeneID" id="11945"/>
<dbReference type="KEGG" id="mmu:11945"/>
<dbReference type="UCSC" id="uc009kxu.1">
    <property type="organism name" value="mouse"/>
</dbReference>
<dbReference type="AGR" id="MGI:88114"/>
<dbReference type="CTD" id="496"/>
<dbReference type="MGI" id="MGI:88114">
    <property type="gene designation" value="Atp4b"/>
</dbReference>
<dbReference type="VEuPathDB" id="HostDB:ENSMUSG00000031449"/>
<dbReference type="eggNOG" id="KOG3927">
    <property type="taxonomic scope" value="Eukaryota"/>
</dbReference>
<dbReference type="GeneTree" id="ENSGT01030000234579"/>
<dbReference type="HOGENOM" id="CLU_057702_1_1_1"/>
<dbReference type="InParanoid" id="P50992"/>
<dbReference type="OMA" id="APRVNCT"/>
<dbReference type="OrthoDB" id="5912413at2759"/>
<dbReference type="PhylomeDB" id="P50992"/>
<dbReference type="TreeFam" id="TF314618"/>
<dbReference type="Reactome" id="R-MMU-936837">
    <property type="pathway name" value="Ion transport by P-type ATPases"/>
</dbReference>
<dbReference type="BioGRID-ORCS" id="11945">
    <property type="hits" value="5 hits in 76 CRISPR screens"/>
</dbReference>
<dbReference type="ChiTaRS" id="Atp4b">
    <property type="organism name" value="mouse"/>
</dbReference>
<dbReference type="PRO" id="PR:P50992"/>
<dbReference type="Proteomes" id="UP000000589">
    <property type="component" value="Chromosome 8"/>
</dbReference>
<dbReference type="RNAct" id="P50992">
    <property type="molecule type" value="protein"/>
</dbReference>
<dbReference type="Bgee" id="ENSMUSG00000031449">
    <property type="expression patterns" value="Expressed in epithelium of stomach and 48 other cell types or tissues"/>
</dbReference>
<dbReference type="ExpressionAtlas" id="P50992">
    <property type="expression patterns" value="baseline and differential"/>
</dbReference>
<dbReference type="GO" id="GO:0016324">
    <property type="term" value="C:apical plasma membrane"/>
    <property type="evidence" value="ECO:0007669"/>
    <property type="project" value="UniProtKB-SubCell"/>
</dbReference>
<dbReference type="GO" id="GO:0005783">
    <property type="term" value="C:endoplasmic reticulum"/>
    <property type="evidence" value="ECO:0000266"/>
    <property type="project" value="MGI"/>
</dbReference>
<dbReference type="GO" id="GO:0005886">
    <property type="term" value="C:plasma membrane"/>
    <property type="evidence" value="ECO:0000266"/>
    <property type="project" value="MGI"/>
</dbReference>
<dbReference type="GO" id="GO:0005889">
    <property type="term" value="C:potassium:proton exchanging ATPase complex"/>
    <property type="evidence" value="ECO:0000266"/>
    <property type="project" value="ComplexPortal"/>
</dbReference>
<dbReference type="GO" id="GO:0005890">
    <property type="term" value="C:sodium:potassium-exchanging ATPase complex"/>
    <property type="evidence" value="ECO:0007669"/>
    <property type="project" value="InterPro"/>
</dbReference>
<dbReference type="GO" id="GO:1901363">
    <property type="term" value="F:heterocyclic compound binding"/>
    <property type="evidence" value="ECO:0007669"/>
    <property type="project" value="Ensembl"/>
</dbReference>
<dbReference type="GO" id="GO:0008900">
    <property type="term" value="F:P-type potassium:proton transporter activity"/>
    <property type="evidence" value="ECO:0000266"/>
    <property type="project" value="MGI"/>
</dbReference>
<dbReference type="GO" id="GO:0007155">
    <property type="term" value="P:cell adhesion"/>
    <property type="evidence" value="ECO:0007669"/>
    <property type="project" value="UniProtKB-KW"/>
</dbReference>
<dbReference type="GO" id="GO:0045851">
    <property type="term" value="P:pH reduction"/>
    <property type="evidence" value="ECO:0000266"/>
    <property type="project" value="MGI"/>
</dbReference>
<dbReference type="GO" id="GO:0071805">
    <property type="term" value="P:potassium ion transmembrane transport"/>
    <property type="evidence" value="ECO:0000266"/>
    <property type="project" value="ComplexPortal"/>
</dbReference>
<dbReference type="GO" id="GO:0006486">
    <property type="term" value="P:protein glycosylation"/>
    <property type="evidence" value="ECO:0000266"/>
    <property type="project" value="MGI"/>
</dbReference>
<dbReference type="GO" id="GO:0010155">
    <property type="term" value="P:regulation of proton transport"/>
    <property type="evidence" value="ECO:0000266"/>
    <property type="project" value="MGI"/>
</dbReference>
<dbReference type="GO" id="GO:0032496">
    <property type="term" value="P:response to lipopolysaccharide"/>
    <property type="evidence" value="ECO:0007669"/>
    <property type="project" value="Ensembl"/>
</dbReference>
<dbReference type="GO" id="GO:0006814">
    <property type="term" value="P:sodium ion transport"/>
    <property type="evidence" value="ECO:0007669"/>
    <property type="project" value="InterPro"/>
</dbReference>
<dbReference type="FunFam" id="1.20.5.170:FF:000061">
    <property type="entry name" value="Sodium/potassium-transporting ATPase subunit beta"/>
    <property type="match status" value="1"/>
</dbReference>
<dbReference type="FunFam" id="2.60.40.1660:FF:000006">
    <property type="entry name" value="Sodium/potassium-transporting ATPase subunit beta"/>
    <property type="match status" value="1"/>
</dbReference>
<dbReference type="Gene3D" id="1.20.5.170">
    <property type="match status" value="1"/>
</dbReference>
<dbReference type="Gene3D" id="2.60.40.1660">
    <property type="entry name" value="Na, k-atpase alpha subunit"/>
    <property type="match status" value="1"/>
</dbReference>
<dbReference type="InterPro" id="IPR000402">
    <property type="entry name" value="Na/K_ATPase_sub_beta"/>
</dbReference>
<dbReference type="InterPro" id="IPR038702">
    <property type="entry name" value="Na/K_ATPase_sub_beta_sf"/>
</dbReference>
<dbReference type="NCBIfam" id="TIGR01107">
    <property type="entry name" value="Na_K_ATPase_bet"/>
    <property type="match status" value="1"/>
</dbReference>
<dbReference type="PANTHER" id="PTHR11523:SF11">
    <property type="entry name" value="POTASSIUM-TRANSPORTING ATPASE SUBUNIT BETA"/>
    <property type="match status" value="1"/>
</dbReference>
<dbReference type="PANTHER" id="PTHR11523">
    <property type="entry name" value="SODIUM/POTASSIUM-DEPENDENT ATPASE BETA SUBUNIT"/>
    <property type="match status" value="1"/>
</dbReference>
<dbReference type="Pfam" id="PF00287">
    <property type="entry name" value="Na_K-ATPase"/>
    <property type="match status" value="1"/>
</dbReference>
<dbReference type="PROSITE" id="PS00390">
    <property type="entry name" value="ATPASE_NA_K_BETA_1"/>
    <property type="match status" value="1"/>
</dbReference>
<dbReference type="PROSITE" id="PS00391">
    <property type="entry name" value="ATPASE_NA_K_BETA_2"/>
    <property type="match status" value="1"/>
</dbReference>
<name>ATP4B_MOUSE</name>
<organism>
    <name type="scientific">Mus musculus</name>
    <name type="common">Mouse</name>
    <dbReference type="NCBI Taxonomy" id="10090"/>
    <lineage>
        <taxon>Eukaryota</taxon>
        <taxon>Metazoa</taxon>
        <taxon>Chordata</taxon>
        <taxon>Craniata</taxon>
        <taxon>Vertebrata</taxon>
        <taxon>Euteleostomi</taxon>
        <taxon>Mammalia</taxon>
        <taxon>Eutheria</taxon>
        <taxon>Euarchontoglires</taxon>
        <taxon>Glires</taxon>
        <taxon>Rodentia</taxon>
        <taxon>Myomorpha</taxon>
        <taxon>Muroidea</taxon>
        <taxon>Muridae</taxon>
        <taxon>Murinae</taxon>
        <taxon>Mus</taxon>
        <taxon>Mus</taxon>
    </lineage>
</organism>
<accession>P50992</accession>
<accession>Q9D6S3</accession>
<accession>Q9D6T2</accession>
<accession>Q9D6Y2</accession>
<evidence type="ECO:0000250" key="1"/>
<evidence type="ECO:0000250" key="2">
    <source>
        <dbReference type="UniProtKB" id="P18434"/>
    </source>
</evidence>
<evidence type="ECO:0000250" key="3">
    <source>
        <dbReference type="UniProtKB" id="P18597"/>
    </source>
</evidence>
<evidence type="ECO:0000250" key="4">
    <source>
        <dbReference type="UniProtKB" id="P19156"/>
    </source>
</evidence>
<evidence type="ECO:0000250" key="5">
    <source>
        <dbReference type="UniProtKB" id="P20648"/>
    </source>
</evidence>
<evidence type="ECO:0000250" key="6">
    <source>
        <dbReference type="UniProtKB" id="P51164"/>
    </source>
</evidence>
<evidence type="ECO:0000255" key="7"/>
<evidence type="ECO:0000269" key="8">
    <source>
    </source>
</evidence>
<evidence type="ECO:0000305" key="9"/>
<keyword id="KW-0130">Cell adhesion</keyword>
<keyword id="KW-1003">Cell membrane</keyword>
<keyword id="KW-1015">Disulfide bond</keyword>
<keyword id="KW-0325">Glycoprotein</keyword>
<keyword id="KW-0375">Hydrogen ion transport</keyword>
<keyword id="KW-0406">Ion transport</keyword>
<keyword id="KW-0472">Membrane</keyword>
<keyword id="KW-0630">Potassium</keyword>
<keyword id="KW-0633">Potassium transport</keyword>
<keyword id="KW-1185">Reference proteome</keyword>
<keyword id="KW-0735">Signal-anchor</keyword>
<keyword id="KW-0812">Transmembrane</keyword>
<keyword id="KW-1133">Transmembrane helix</keyword>
<keyword id="KW-0813">Transport</keyword>
<comment type="function">
    <text evidence="3 4">The beta subunit of the gastric H(+)/K(+) ATPase pump which transports H(+) ions in exchange for K(+) ions across the apical membrane of parietal cells. Plays a structural and regulatory role in the assembly and membrane targeting of a functionally active pump (By similarity). Within a transport cycle, the transfer of a H(+) ion across the membrane is coupled to ATP hydrolysis and is associated with a transient phosphorylation of the alpha subunit that shifts the pump conformation from inward-facing (E1) to outward-facing state (E2). Interacts with the phosphorylation domain of the alpha subunit and functions as a ratchet, stabilizing the lumenal-open E2 conformation and preventing the reverse reaction of the transport cycle (By similarity).</text>
</comment>
<comment type="subunit">
    <text evidence="2 3">The ATPase pump is composed of two subunits: alpha (catalytic) and beta (regulatory). Interacts with alpha subunit ATP12A; this interaction is required for the formation of a functionally active pump and targeting at the plasma membrane (By similarity). Interacts (via N-terminus) with alpha subunit ATP4A (via the P-domain) (By similarity).</text>
</comment>
<comment type="subcellular location">
    <subcellularLocation>
        <location evidence="5">Apical cell membrane</location>
        <topology evidence="7">Single-pass type II membrane protein</topology>
    </subcellularLocation>
    <subcellularLocation>
        <location evidence="3">Cell membrane</location>
        <topology evidence="7">Single-pass type II membrane protein</topology>
    </subcellularLocation>
    <text evidence="5">Localized in the apical canalicular membrane of parietal cells.</text>
</comment>
<comment type="tissue specificity">
    <text evidence="8">Expressed in parietal cells (at protein level).</text>
</comment>
<comment type="domain">
    <text evidence="6">The C-terminal lobe folds into an immunoglobulin-like domain and mediates cell adhesion properties.</text>
</comment>
<comment type="PTM">
    <text evidence="3">N-glycosylation is necessary for assembly and functional expression of the pump at the plasma membrane.</text>
</comment>
<comment type="similarity">
    <text evidence="9">Belongs to the X(+)/potassium ATPases subunit beta family.</text>
</comment>
<feature type="chain" id="PRO_0000219092" description="Potassium-transporting ATPase subunit beta">
    <location>
        <begin position="1"/>
        <end position="294"/>
    </location>
</feature>
<feature type="topological domain" description="Cytoplasmic" evidence="7">
    <location>
        <begin position="1"/>
        <end position="36"/>
    </location>
</feature>
<feature type="transmembrane region" description="Helical; Signal-anchor for type II membrane protein" evidence="7">
    <location>
        <begin position="37"/>
        <end position="57"/>
    </location>
</feature>
<feature type="topological domain" description="Extracellular" evidence="7">
    <location>
        <begin position="58"/>
        <end position="294"/>
    </location>
</feature>
<feature type="region of interest" description="immunoglobulin-like" evidence="1">
    <location>
        <begin position="194"/>
        <end position="294"/>
    </location>
</feature>
<feature type="glycosylation site" description="N-linked (GlcNAc...) asparagine" evidence="3">
    <location>
        <position position="99"/>
    </location>
</feature>
<feature type="glycosylation site" description="N-linked (GlcNAc...) asparagine" evidence="3">
    <location>
        <position position="103"/>
    </location>
</feature>
<feature type="glycosylation site" description="N-linked (GlcNAc...) asparagine" evidence="3">
    <location>
        <position position="130"/>
    </location>
</feature>
<feature type="glycosylation site" description="N-linked (GlcNAc...) asparagine" evidence="3">
    <location>
        <position position="146"/>
    </location>
</feature>
<feature type="glycosylation site" description="N-linked (GlcNAc...) asparagine" evidence="3">
    <location>
        <position position="161"/>
    </location>
</feature>
<feature type="glycosylation site" description="N-linked (GlcNAc...) asparagine" evidence="3">
    <location>
        <position position="193"/>
    </location>
</feature>
<feature type="glycosylation site" description="N-linked (GlcNAc...) asparagine" evidence="3">
    <location>
        <position position="225"/>
    </location>
</feature>
<feature type="disulfide bond" evidence="2">
    <location>
        <begin position="131"/>
        <end position="152"/>
    </location>
</feature>
<feature type="disulfide bond" evidence="2">
    <location>
        <begin position="162"/>
        <end position="178"/>
    </location>
</feature>
<feature type="disulfide bond" evidence="2">
    <location>
        <begin position="201"/>
        <end position="266"/>
    </location>
</feature>
<feature type="sequence conflict" description="In Ref. 3; BAB26635." evidence="9" ref="3">
    <original>T</original>
    <variation>P</variation>
    <location>
        <position position="33"/>
    </location>
</feature>
<feature type="sequence conflict" description="In Ref. 3; BAB26654." evidence="9" ref="3">
    <original>TE</original>
    <variation>IK</variation>
    <location>
        <begin position="214"/>
        <end position="215"/>
    </location>
</feature>
<feature type="sequence conflict" description="In Ref. 3; BAB26654." evidence="9" ref="3">
    <original>Q</original>
    <variation>L</variation>
    <location>
        <position position="218"/>
    </location>
</feature>